<feature type="chain" id="PRO_0000422324" description="6-hydroxy-3-succinoylpyridine 3-monooxygenase HspA">
    <location>
        <begin position="1"/>
        <end position="312"/>
    </location>
</feature>
<feature type="domain" description="NYN" evidence="1">
    <location>
        <begin position="14"/>
        <end position="210"/>
    </location>
</feature>
<proteinExistence type="evidence at protein level"/>
<dbReference type="EC" id="1.14.13.163" evidence="2"/>
<dbReference type="EMBL" id="DQ988162">
    <property type="protein sequence ID" value="ABM05923.1"/>
    <property type="molecule type" value="Genomic_DNA"/>
</dbReference>
<dbReference type="EMBL" id="CP002870">
    <property type="protein sequence ID" value="AEJ10965.1"/>
    <property type="status" value="ALT_INIT"/>
    <property type="molecule type" value="Genomic_DNA"/>
</dbReference>
<dbReference type="RefSeq" id="WP_004375200.1">
    <property type="nucleotide sequence ID" value="NC_015733.1"/>
</dbReference>
<dbReference type="SMR" id="B1N1A2"/>
<dbReference type="KEGG" id="ppt:PPS_0380"/>
<dbReference type="eggNOG" id="COG5642">
    <property type="taxonomic scope" value="Bacteria"/>
</dbReference>
<dbReference type="HOGENOM" id="CLU_076076_0_0_6"/>
<dbReference type="BioCyc" id="MetaCyc:MONOMER-17157"/>
<dbReference type="BRENDA" id="1.14.13.163">
    <property type="organism ID" value="5092"/>
</dbReference>
<dbReference type="UniPathway" id="UPA00106"/>
<dbReference type="GO" id="GO:0004497">
    <property type="term" value="F:monooxygenase activity"/>
    <property type="evidence" value="ECO:0007669"/>
    <property type="project" value="UniProtKB-KW"/>
</dbReference>
<dbReference type="GO" id="GO:0004540">
    <property type="term" value="F:RNA nuclease activity"/>
    <property type="evidence" value="ECO:0007669"/>
    <property type="project" value="InterPro"/>
</dbReference>
<dbReference type="GO" id="GO:0009820">
    <property type="term" value="P:alkaloid metabolic process"/>
    <property type="evidence" value="ECO:0007669"/>
    <property type="project" value="UniProtKB-KW"/>
</dbReference>
<dbReference type="GO" id="GO:0019608">
    <property type="term" value="P:nicotine catabolic process"/>
    <property type="evidence" value="ECO:0000314"/>
    <property type="project" value="UniProtKB"/>
</dbReference>
<dbReference type="CDD" id="cd18722">
    <property type="entry name" value="PIN_NicB-like"/>
    <property type="match status" value="1"/>
</dbReference>
<dbReference type="Gene3D" id="3.40.50.1010">
    <property type="entry name" value="5'-nuclease"/>
    <property type="match status" value="1"/>
</dbReference>
<dbReference type="InterPro" id="IPR021139">
    <property type="entry name" value="NYN"/>
</dbReference>
<dbReference type="InterPro" id="IPR024467">
    <property type="entry name" value="Xre/MbcA/ParS-like_toxin-bd"/>
</dbReference>
<dbReference type="Pfam" id="PF01936">
    <property type="entry name" value="NYN"/>
    <property type="match status" value="1"/>
</dbReference>
<dbReference type="Pfam" id="PF09722">
    <property type="entry name" value="Xre_MbcA_ParS_C"/>
    <property type="match status" value="1"/>
</dbReference>
<comment type="function">
    <text evidence="2">Involved in the nicotine degradation (PubMed:18203859). Catalyzes the cleavage of 6-hydroxy-3-succinoylpyridine (HSP) by incorporation of oxygen at the 3-position to produce to 2,5-dihydroxypyridine (DHP) and succinic semialdehyde (PubMed:18203859).</text>
</comment>
<comment type="catalytic activity">
    <reaction evidence="2">
        <text>4-(6-hydroxypyridin-3-yl)-4-oxobutanoate + 2 NADH + O2 + 2 H(+) = 2,5-dihydroxypyridine + succinate semialdehyde + 2 NAD(+) + H2O</text>
        <dbReference type="Rhea" id="RHEA:33927"/>
        <dbReference type="ChEBI" id="CHEBI:15377"/>
        <dbReference type="ChEBI" id="CHEBI:15378"/>
        <dbReference type="ChEBI" id="CHEBI:15379"/>
        <dbReference type="ChEBI" id="CHEBI:16364"/>
        <dbReference type="ChEBI" id="CHEBI:57540"/>
        <dbReference type="ChEBI" id="CHEBI:57706"/>
        <dbReference type="ChEBI" id="CHEBI:57945"/>
        <dbReference type="ChEBI" id="CHEBI:66893"/>
        <dbReference type="EC" id="1.14.13.163"/>
    </reaction>
</comment>
<comment type="pathway">
    <text evidence="7">Alkaloid degradation; nicotine degradation.</text>
</comment>
<comment type="disruption phenotype">
    <text evidence="3">Cells lacking this gene are still able to grow in nicotine medium.</text>
</comment>
<comment type="miscellaneous">
    <text evidence="8">The catalytic efficiency of HspA is lower than that of HspB.</text>
</comment>
<comment type="sequence caution" evidence="6">
    <conflict type="erroneous initiation">
        <sequence resource="EMBL-CDS" id="AEJ10965"/>
    </conflict>
    <text>Extended N-terminus.</text>
</comment>
<keyword id="KW-0017">Alkaloid metabolism</keyword>
<keyword id="KW-0503">Monooxygenase</keyword>
<keyword id="KW-0520">NAD</keyword>
<keyword id="KW-0560">Oxidoreductase</keyword>
<gene>
    <name evidence="5" type="primary">hspA</name>
    <name evidence="9" type="synonym">nicB</name>
    <name evidence="10" type="ORF">PPS_0380</name>
</gene>
<sequence length="312" mass="35610">MQRKLDSEPLRTRIYIDGYNFYYGCLRGTPYKWLDLLPLFEKHILPSILVTDNHGQIRAWRLLESPSIKYFTAKIIESVARAGDSVSSQARYHTALRKLHDGRIELIEGYYAVNKMKVKIVDPENPDKAPRECREIQAWKVEEKQSDVNLALQAYHDSITGQVDHAVIVTNDTDIAPALQMIRAHTDVRIGVVVPTSGQNRSANTDLIKFAHWKREHINSGELAACQLPRVIPGRKPTIKPESWYGQPELLQEILDLAIPVRGSRAAAFKWMEQPNQFLSGERPIELVETAEGATRVLQYIHSWIAQQEELP</sequence>
<name>HSPA_PSEP6</name>
<organism>
    <name type="scientific">Pseudomonas putida (strain DSM 28022 / S16)</name>
    <dbReference type="NCBI Taxonomy" id="1042876"/>
    <lineage>
        <taxon>Bacteria</taxon>
        <taxon>Pseudomonadati</taxon>
        <taxon>Pseudomonadota</taxon>
        <taxon>Gammaproteobacteria</taxon>
        <taxon>Pseudomonadales</taxon>
        <taxon>Pseudomonadaceae</taxon>
        <taxon>Pseudomonas</taxon>
    </lineage>
</organism>
<evidence type="ECO:0000255" key="1"/>
<evidence type="ECO:0000269" key="2">
    <source>
    </source>
</evidence>
<evidence type="ECO:0000269" key="3">
    <source>
    </source>
</evidence>
<evidence type="ECO:0000303" key="4">
    <source>
    </source>
</evidence>
<evidence type="ECO:0000303" key="5">
    <source>
    </source>
</evidence>
<evidence type="ECO:0000305" key="6"/>
<evidence type="ECO:0000305" key="7">
    <source>
    </source>
</evidence>
<evidence type="ECO:0000305" key="8">
    <source>
    </source>
</evidence>
<evidence type="ECO:0000312" key="9">
    <source>
        <dbReference type="EMBL" id="ABM05923.1"/>
    </source>
</evidence>
<evidence type="ECO:0000312" key="10">
    <source>
        <dbReference type="EMBL" id="AEJ10965.1"/>
    </source>
</evidence>
<protein>
    <recommendedName>
        <fullName evidence="6">6-hydroxy-3-succinoylpyridine 3-monooxygenase HspA</fullName>
        <ecNumber evidence="2">1.14.13.163</ecNumber>
    </recommendedName>
    <alternativeName>
        <fullName evidence="4">6-hydroxy-3-succinoylpyridine hydroxylase</fullName>
        <shortName evidence="4">HSP hydroxylase</shortName>
    </alternativeName>
</protein>
<accession>B1N1A2</accession>
<accession>F8FZQ5</accession>
<reference key="1">
    <citation type="journal article" date="2008" name="Appl. Environ. Microbiol.">
        <title>A novel gene, encoding 6-hydroxy-3-succinoylpyridine hydroxylase, involved in nicotine degradation by Pseudomonas putida strain S16.</title>
        <authorList>
            <person name="Tang H."/>
            <person name="Wang S."/>
            <person name="Ma L."/>
            <person name="Meng X."/>
            <person name="Deng Z."/>
            <person name="Zhang D."/>
            <person name="Ma C."/>
            <person name="Xu P."/>
        </authorList>
    </citation>
    <scope>NUCLEOTIDE SEQUENCE [GENOMIC DNA]</scope>
    <scope>FUNCTION</scope>
    <scope>CATALYTIC ACTIVITY</scope>
    <source>
        <strain>DSM 28022 / S16</strain>
    </source>
</reference>
<reference key="2">
    <citation type="journal article" date="2011" name="J. Bacteriol.">
        <title>Complete genome sequence of the nicotine-degrading Pseudomonas putida strain S16.</title>
        <authorList>
            <person name="Yu H."/>
            <person name="Tang H."/>
            <person name="Wang L."/>
            <person name="Yao Y."/>
            <person name="Wu G."/>
            <person name="Xu P."/>
        </authorList>
    </citation>
    <scope>NUCLEOTIDE SEQUENCE [LARGE SCALE GENOMIC DNA]</scope>
    <source>
        <strain>DSM 28022 / S16</strain>
    </source>
</reference>
<reference key="3">
    <citation type="journal article" date="2011" name="J. Biol. Chem.">
        <title>A novel NADH-dependent and FAD-containing hydroxylase is crucial for nicotine degradation by Pseudomonas putida.</title>
        <authorList>
            <person name="Tang H."/>
            <person name="Yao Y."/>
            <person name="Zhang D."/>
            <person name="Meng X."/>
            <person name="Wang L."/>
            <person name="Yu H."/>
            <person name="Ma L."/>
            <person name="Xu P."/>
        </authorList>
    </citation>
    <scope>DISRUPTION PHENOTYPE</scope>
    <source>
        <strain>DSM 28022 / S16</strain>
    </source>
</reference>